<organism>
    <name type="scientific">Arabidopsis thaliana</name>
    <name type="common">Mouse-ear cress</name>
    <dbReference type="NCBI Taxonomy" id="3702"/>
    <lineage>
        <taxon>Eukaryota</taxon>
        <taxon>Viridiplantae</taxon>
        <taxon>Streptophyta</taxon>
        <taxon>Embryophyta</taxon>
        <taxon>Tracheophyta</taxon>
        <taxon>Spermatophyta</taxon>
        <taxon>Magnoliopsida</taxon>
        <taxon>eudicotyledons</taxon>
        <taxon>Gunneridae</taxon>
        <taxon>Pentapetalae</taxon>
        <taxon>rosids</taxon>
        <taxon>malvids</taxon>
        <taxon>Brassicales</taxon>
        <taxon>Brassicaceae</taxon>
        <taxon>Camelineae</taxon>
        <taxon>Arabidopsis</taxon>
    </lineage>
</organism>
<proteinExistence type="inferred from homology"/>
<keyword id="KW-0067">ATP-binding</keyword>
<keyword id="KW-1017">Isopeptide bond</keyword>
<keyword id="KW-0460">Magnesium</keyword>
<keyword id="KW-0472">Membrane</keyword>
<keyword id="KW-0479">Metal-binding</keyword>
<keyword id="KW-0547">Nucleotide-binding</keyword>
<keyword id="KW-1185">Reference proteome</keyword>
<keyword id="KW-1278">Translocase</keyword>
<keyword id="KW-0812">Transmembrane</keyword>
<keyword id="KW-1133">Transmembrane helix</keyword>
<keyword id="KW-0832">Ubl conjugation</keyword>
<gene>
    <name evidence="4" type="primary">ALA5</name>
    <name evidence="7" type="ordered locus">At1g72700</name>
    <name evidence="8" type="ORF">F28P22.11</name>
</gene>
<feature type="chain" id="PRO_0000046389" description="Probable phospholipid-transporting ATPase 5">
    <location>
        <begin position="1"/>
        <end position="1228"/>
    </location>
</feature>
<feature type="topological domain" description="Cytoplasmic" evidence="3">
    <location>
        <begin position="1"/>
        <end position="74"/>
    </location>
</feature>
<feature type="transmembrane region" description="Helical" evidence="3">
    <location>
        <begin position="75"/>
        <end position="96"/>
    </location>
</feature>
<feature type="topological domain" description="Extracellular" evidence="3">
    <location>
        <begin position="97"/>
        <end position="100"/>
    </location>
</feature>
<feature type="transmembrane region" description="Helical" evidence="3">
    <location>
        <begin position="101"/>
        <end position="123"/>
    </location>
</feature>
<feature type="topological domain" description="Cytoplasmic" evidence="3">
    <location>
        <begin position="124"/>
        <end position="305"/>
    </location>
</feature>
<feature type="transmembrane region" description="Helical" evidence="3">
    <location>
        <begin position="306"/>
        <end position="327"/>
    </location>
</feature>
<feature type="topological domain" description="Extracellular" evidence="3">
    <location>
        <begin position="328"/>
        <end position="359"/>
    </location>
</feature>
<feature type="transmembrane region" description="Helical" evidence="3">
    <location>
        <begin position="360"/>
        <end position="377"/>
    </location>
</feature>
<feature type="topological domain" description="Cytoplasmic" evidence="3">
    <location>
        <begin position="378"/>
        <end position="934"/>
    </location>
</feature>
<feature type="transmembrane region" description="Helical" evidence="3">
    <location>
        <begin position="935"/>
        <end position="954"/>
    </location>
</feature>
<feature type="topological domain" description="Extracellular" evidence="3">
    <location>
        <begin position="955"/>
        <end position="968"/>
    </location>
</feature>
<feature type="transmembrane region" description="Helical" evidence="3">
    <location>
        <begin position="969"/>
        <end position="988"/>
    </location>
</feature>
<feature type="topological domain" description="Cytoplasmic" evidence="3">
    <location>
        <begin position="989"/>
        <end position="1018"/>
    </location>
</feature>
<feature type="transmembrane region" description="Helical" evidence="3">
    <location>
        <begin position="1019"/>
        <end position="1041"/>
    </location>
</feature>
<feature type="topological domain" description="Extracellular" evidence="3">
    <location>
        <begin position="1042"/>
        <end position="1054"/>
    </location>
</feature>
<feature type="transmembrane region" description="Helical" evidence="3">
    <location>
        <begin position="1055"/>
        <end position="1077"/>
    </location>
</feature>
<feature type="topological domain" description="Cytoplasmic" evidence="3">
    <location>
        <begin position="1078"/>
        <end position="1083"/>
    </location>
</feature>
<feature type="transmembrane region" description="Helical" evidence="3">
    <location>
        <begin position="1084"/>
        <end position="1104"/>
    </location>
</feature>
<feature type="topological domain" description="Extracellular" evidence="3">
    <location>
        <begin position="1105"/>
        <end position="1117"/>
    </location>
</feature>
<feature type="transmembrane region" description="Helical" evidence="3">
    <location>
        <begin position="1118"/>
        <end position="1146"/>
    </location>
</feature>
<feature type="topological domain" description="Cytoplasmic" evidence="3">
    <location>
        <begin position="1147"/>
        <end position="1228"/>
    </location>
</feature>
<feature type="active site" description="4-aspartylphosphate intermediate" evidence="1">
    <location>
        <position position="425"/>
    </location>
</feature>
<feature type="binding site" evidence="1">
    <location>
        <position position="879"/>
    </location>
    <ligand>
        <name>Mg(2+)</name>
        <dbReference type="ChEBI" id="CHEBI:18420"/>
    </ligand>
</feature>
<feature type="binding site" evidence="1">
    <location>
        <position position="883"/>
    </location>
    <ligand>
        <name>Mg(2+)</name>
        <dbReference type="ChEBI" id="CHEBI:18420"/>
    </ligand>
</feature>
<feature type="cross-link" description="Glycyl lysine isopeptide (Lys-Gly) (interchain with G-Cter in ubiquitin)" evidence="2">
    <location>
        <position position="616"/>
    </location>
</feature>
<accession>Q9SGG3</accession>
<evidence type="ECO:0000250" key="1"/>
<evidence type="ECO:0000250" key="2">
    <source>
        <dbReference type="UniProtKB" id="Q9SLK6"/>
    </source>
</evidence>
<evidence type="ECO:0000255" key="3"/>
<evidence type="ECO:0000303" key="4">
    <source>
    </source>
</evidence>
<evidence type="ECO:0000305" key="5"/>
<evidence type="ECO:0000305" key="6">
    <source>
    </source>
</evidence>
<evidence type="ECO:0000312" key="7">
    <source>
        <dbReference type="Araport" id="AT1G72700"/>
    </source>
</evidence>
<evidence type="ECO:0000312" key="8">
    <source>
        <dbReference type="EMBL" id="AAG51844.1"/>
    </source>
</evidence>
<protein>
    <recommendedName>
        <fullName evidence="4">Probable phospholipid-transporting ATPase 5</fullName>
        <shortName evidence="4">AtALA5</shortName>
        <ecNumber evidence="6">7.6.2.1</ecNumber>
    </recommendedName>
    <alternativeName>
        <fullName evidence="4">Aminophospholipid flippase 5</fullName>
    </alternativeName>
</protein>
<sequence>MARGRIRSKLRLSLLYTFGCLRPATLEGQDSQPIQGPGFSRTVFCNQPHMHKKKPLRYRSNYVSTTRYNLITFFPKSLYEQFHRAANLYFLVAAILSVFPLSPFNKWSMIAPLVFVVGLSMLKEALEDWRRFMQDVKINARKTCVHKSDGVFRQRKWKKVSVGDIVKVEKDEFFPADLLLLSSSYEDGICYVETMNLDGETNLKVKRSLEVSLPLDDDESFKNFMATIRCEDPNPNLYTFVGNLEFERQTFPLDPSQILLRDSKLRNTTYVYGVVVFTGFDTKVMQNSTKSPSKRSRIERTMDYIIYTLLVLLILISCISSSGFAWETEFHMPKMWYLRPGEPIDFTNPINPIYAGVVHLITALLLYGYLIPISLYVSIEVVKVWQASFINQDLHMYDDESGVPANARTSNLNEELGQVHTILSDKTGTLTCNQMDFLKCSIAGTSYGVRSSEVEVAAAKQMAVDLEEHGEISSTPQSQTKVYGTWDSSRTQEIEVEGDNNYNTPRAPIKGFGFEDNRLMNGNWLRESQPNDILQFFRILAICHTAIPELNEETGKYTYEAESPDEASFLAAAREFGFEFFKRTQSSVFIRERFSGSGQIIEREYKVLNLLEFTSKRKRMTVIVRDEEGQILLLCKGADSIIFERLAKNGKTYLGPTTRHLTEYGEAGLRTLALAYRKLDEDEYAAWNSEFLKAKTSIGSDRDELLETGADMIEKELILIGATAVEDKLQKGVPQCIDKLAQAGLKLWVLTGDKMETAINIGFACSLLRQGMRQICITSMNSEGGSQDSKRVVKENILNQLTKAVQMVKLEKDPHAAFALIIDGKTLTYALEDDMKYQFLALAVDCASVICCRVSPKQKALVVRLVKEGTGKTTLAIGDGANDVGMIQEADIGVGISGVEGMQAVMASDFSIAQFRFLERLLVVHGHWCYKRIAQMICYFFYKNIAFGLTLFYFEAFTGFSGQSVYNDYYLLLFNVVLTSLPVIALGVFEQDVSSEICLQFPALYQQGTKNLFFDWSRILGWMCNGVYASLVIFFLNIGIIYSQAFRDNGQTADMDAVGTTMFTCIIWAANVQIALTMSHFTWIQHVLIWGSIGMWYLFVAIYSMMPPSYSGNIYRILDEILAPAPIYWMATLLVTVAAVLPYVAHIAFQRFLNPLDHHIIQEIKYYGRDIEDARLWTRERTKAREKTKIGFTARVDAKIRHLRSKLNKKQSNLSHFSAQDAMSPRSL</sequence>
<dbReference type="EC" id="7.6.2.1" evidence="6"/>
<dbReference type="EMBL" id="AC010926">
    <property type="protein sequence ID" value="AAG51844.1"/>
    <property type="molecule type" value="Genomic_DNA"/>
</dbReference>
<dbReference type="EMBL" id="CP002684">
    <property type="protein sequence ID" value="AEE35362.1"/>
    <property type="molecule type" value="Genomic_DNA"/>
</dbReference>
<dbReference type="EMBL" id="CP002684">
    <property type="protein sequence ID" value="ANM60518.1"/>
    <property type="molecule type" value="Genomic_DNA"/>
</dbReference>
<dbReference type="EMBL" id="CP002684">
    <property type="protein sequence ID" value="ANM60519.1"/>
    <property type="molecule type" value="Genomic_DNA"/>
</dbReference>
<dbReference type="PIR" id="G96751">
    <property type="entry name" value="G96751"/>
</dbReference>
<dbReference type="RefSeq" id="NP_001322799.1">
    <property type="nucleotide sequence ID" value="NM_001334547.1"/>
</dbReference>
<dbReference type="RefSeq" id="NP_001322800.1">
    <property type="nucleotide sequence ID" value="NM_001334546.1"/>
</dbReference>
<dbReference type="RefSeq" id="NP_177414.1">
    <property type="nucleotide sequence ID" value="NM_105929.5"/>
</dbReference>
<dbReference type="SMR" id="Q9SGG3"/>
<dbReference type="BioGRID" id="28821">
    <property type="interactions" value="1"/>
</dbReference>
<dbReference type="FunCoup" id="Q9SGG3">
    <property type="interactions" value="1569"/>
</dbReference>
<dbReference type="STRING" id="3702.Q9SGG3"/>
<dbReference type="iPTMnet" id="Q9SGG3"/>
<dbReference type="PaxDb" id="3702-AT1G72700.1"/>
<dbReference type="ProteomicsDB" id="244828"/>
<dbReference type="EnsemblPlants" id="AT1G72700.1">
    <property type="protein sequence ID" value="AT1G72700.1"/>
    <property type="gene ID" value="AT1G72700"/>
</dbReference>
<dbReference type="EnsemblPlants" id="AT1G72700.2">
    <property type="protein sequence ID" value="AT1G72700.2"/>
    <property type="gene ID" value="AT1G72700"/>
</dbReference>
<dbReference type="EnsemblPlants" id="AT1G72700.3">
    <property type="protein sequence ID" value="AT1G72700.3"/>
    <property type="gene ID" value="AT1G72700"/>
</dbReference>
<dbReference type="GeneID" id="843602"/>
<dbReference type="Gramene" id="AT1G72700.1">
    <property type="protein sequence ID" value="AT1G72700.1"/>
    <property type="gene ID" value="AT1G72700"/>
</dbReference>
<dbReference type="Gramene" id="AT1G72700.2">
    <property type="protein sequence ID" value="AT1G72700.2"/>
    <property type="gene ID" value="AT1G72700"/>
</dbReference>
<dbReference type="Gramene" id="AT1G72700.3">
    <property type="protein sequence ID" value="AT1G72700.3"/>
    <property type="gene ID" value="AT1G72700"/>
</dbReference>
<dbReference type="KEGG" id="ath:AT1G72700"/>
<dbReference type="Araport" id="AT1G72700"/>
<dbReference type="TAIR" id="AT1G72700">
    <property type="gene designation" value="ALA5"/>
</dbReference>
<dbReference type="eggNOG" id="KOG0206">
    <property type="taxonomic scope" value="Eukaryota"/>
</dbReference>
<dbReference type="HOGENOM" id="CLU_000846_5_2_1"/>
<dbReference type="InParanoid" id="Q9SGG3"/>
<dbReference type="OMA" id="HGRWNLY"/>
<dbReference type="OrthoDB" id="377733at2759"/>
<dbReference type="PhylomeDB" id="Q9SGG3"/>
<dbReference type="BioCyc" id="ARA:AT1G72700-MONOMER"/>
<dbReference type="PRO" id="PR:Q9SGG3"/>
<dbReference type="Proteomes" id="UP000006548">
    <property type="component" value="Chromosome 1"/>
</dbReference>
<dbReference type="ExpressionAtlas" id="Q9SGG3">
    <property type="expression patterns" value="baseline and differential"/>
</dbReference>
<dbReference type="GO" id="GO:0016020">
    <property type="term" value="C:membrane"/>
    <property type="evidence" value="ECO:0007669"/>
    <property type="project" value="UniProtKB-SubCell"/>
</dbReference>
<dbReference type="GO" id="GO:0005524">
    <property type="term" value="F:ATP binding"/>
    <property type="evidence" value="ECO:0007669"/>
    <property type="project" value="UniProtKB-KW"/>
</dbReference>
<dbReference type="GO" id="GO:0016887">
    <property type="term" value="F:ATP hydrolysis activity"/>
    <property type="evidence" value="ECO:0007669"/>
    <property type="project" value="InterPro"/>
</dbReference>
<dbReference type="GO" id="GO:0140327">
    <property type="term" value="F:flippase activity"/>
    <property type="evidence" value="ECO:0000314"/>
    <property type="project" value="TAIR"/>
</dbReference>
<dbReference type="GO" id="GO:0000287">
    <property type="term" value="F:magnesium ion binding"/>
    <property type="evidence" value="ECO:0007669"/>
    <property type="project" value="InterPro"/>
</dbReference>
<dbReference type="GO" id="GO:0015914">
    <property type="term" value="P:phospholipid transport"/>
    <property type="evidence" value="ECO:0007669"/>
    <property type="project" value="InterPro"/>
</dbReference>
<dbReference type="GO" id="GO:1901703">
    <property type="term" value="P:protein localization involved in auxin polar transport"/>
    <property type="evidence" value="ECO:0000316"/>
    <property type="project" value="TAIR"/>
</dbReference>
<dbReference type="CDD" id="cd02073">
    <property type="entry name" value="P-type_ATPase_APLT_Dnf-like"/>
    <property type="match status" value="1"/>
</dbReference>
<dbReference type="FunFam" id="2.70.150.10:FF:000023">
    <property type="entry name" value="Phospholipid-transporting ATPase"/>
    <property type="match status" value="1"/>
</dbReference>
<dbReference type="FunFam" id="3.40.1110.10:FF:000050">
    <property type="entry name" value="Phospholipid-transporting ATPase"/>
    <property type="match status" value="1"/>
</dbReference>
<dbReference type="FunFam" id="3.40.50.1000:FF:000014">
    <property type="entry name" value="Phospholipid-transporting ATPase"/>
    <property type="match status" value="1"/>
</dbReference>
<dbReference type="Gene3D" id="3.40.1110.10">
    <property type="entry name" value="Calcium-transporting ATPase, cytoplasmic domain N"/>
    <property type="match status" value="2"/>
</dbReference>
<dbReference type="Gene3D" id="2.70.150.10">
    <property type="entry name" value="Calcium-transporting ATPase, cytoplasmic transduction domain A"/>
    <property type="match status" value="1"/>
</dbReference>
<dbReference type="Gene3D" id="3.40.50.1000">
    <property type="entry name" value="HAD superfamily/HAD-like"/>
    <property type="match status" value="2"/>
</dbReference>
<dbReference type="InterPro" id="IPR023299">
    <property type="entry name" value="ATPase_P-typ_cyto_dom_N"/>
</dbReference>
<dbReference type="InterPro" id="IPR018303">
    <property type="entry name" value="ATPase_P-typ_P_site"/>
</dbReference>
<dbReference type="InterPro" id="IPR023298">
    <property type="entry name" value="ATPase_P-typ_TM_dom_sf"/>
</dbReference>
<dbReference type="InterPro" id="IPR008250">
    <property type="entry name" value="ATPase_P-typ_transduc_dom_A_sf"/>
</dbReference>
<dbReference type="InterPro" id="IPR036412">
    <property type="entry name" value="HAD-like_sf"/>
</dbReference>
<dbReference type="InterPro" id="IPR023214">
    <property type="entry name" value="HAD_sf"/>
</dbReference>
<dbReference type="InterPro" id="IPR006539">
    <property type="entry name" value="P-type_ATPase_IV"/>
</dbReference>
<dbReference type="InterPro" id="IPR032631">
    <property type="entry name" value="P-type_ATPase_N"/>
</dbReference>
<dbReference type="InterPro" id="IPR001757">
    <property type="entry name" value="P_typ_ATPase"/>
</dbReference>
<dbReference type="InterPro" id="IPR032630">
    <property type="entry name" value="P_typ_ATPase_c"/>
</dbReference>
<dbReference type="InterPro" id="IPR044492">
    <property type="entry name" value="P_typ_ATPase_HD_dom"/>
</dbReference>
<dbReference type="NCBIfam" id="TIGR01652">
    <property type="entry name" value="ATPase-Plipid"/>
    <property type="match status" value="1"/>
</dbReference>
<dbReference type="NCBIfam" id="TIGR01494">
    <property type="entry name" value="ATPase_P-type"/>
    <property type="match status" value="1"/>
</dbReference>
<dbReference type="PANTHER" id="PTHR24092:SF150">
    <property type="entry name" value="PHOSPHOLIPID-TRANSPORTING ATPASE"/>
    <property type="match status" value="1"/>
</dbReference>
<dbReference type="PANTHER" id="PTHR24092">
    <property type="entry name" value="PROBABLE PHOSPHOLIPID-TRANSPORTING ATPASE"/>
    <property type="match status" value="1"/>
</dbReference>
<dbReference type="Pfam" id="PF13246">
    <property type="entry name" value="Cation_ATPase"/>
    <property type="match status" value="1"/>
</dbReference>
<dbReference type="Pfam" id="PF16212">
    <property type="entry name" value="PhoLip_ATPase_C"/>
    <property type="match status" value="1"/>
</dbReference>
<dbReference type="Pfam" id="PF16209">
    <property type="entry name" value="PhoLip_ATPase_N"/>
    <property type="match status" value="1"/>
</dbReference>
<dbReference type="PRINTS" id="PR00119">
    <property type="entry name" value="CATATPASE"/>
</dbReference>
<dbReference type="SFLD" id="SFLDG00002">
    <property type="entry name" value="C1.7:_P-type_atpase_like"/>
    <property type="match status" value="1"/>
</dbReference>
<dbReference type="SFLD" id="SFLDF00027">
    <property type="entry name" value="p-type_atpase"/>
    <property type="match status" value="1"/>
</dbReference>
<dbReference type="SUPFAM" id="SSF81653">
    <property type="entry name" value="Calcium ATPase, transduction domain A"/>
    <property type="match status" value="1"/>
</dbReference>
<dbReference type="SUPFAM" id="SSF81665">
    <property type="entry name" value="Calcium ATPase, transmembrane domain M"/>
    <property type="match status" value="1"/>
</dbReference>
<dbReference type="SUPFAM" id="SSF56784">
    <property type="entry name" value="HAD-like"/>
    <property type="match status" value="1"/>
</dbReference>
<dbReference type="SUPFAM" id="SSF81660">
    <property type="entry name" value="Metal cation-transporting ATPase, ATP-binding domain N"/>
    <property type="match status" value="1"/>
</dbReference>
<dbReference type="PROSITE" id="PS00154">
    <property type="entry name" value="ATPASE_E1_E2"/>
    <property type="match status" value="1"/>
</dbReference>
<comment type="function">
    <text evidence="6">Involved in transport of phospholipids.</text>
</comment>
<comment type="catalytic activity">
    <reaction evidence="6">
        <text>ATP + H2O + phospholipidSide 1 = ADP + phosphate + phospholipidSide 2.</text>
        <dbReference type="EC" id="7.6.2.1"/>
    </reaction>
</comment>
<comment type="subcellular location">
    <subcellularLocation>
        <location evidence="3">Membrane</location>
        <topology evidence="3">Multi-pass membrane protein</topology>
    </subcellularLocation>
</comment>
<comment type="similarity">
    <text evidence="5">Belongs to the cation transport ATPase (P-type) (TC 3.A.3) family. Type IV subfamily.</text>
</comment>
<reference key="1">
    <citation type="journal article" date="2000" name="Nature">
        <title>Sequence and analysis of chromosome 1 of the plant Arabidopsis thaliana.</title>
        <authorList>
            <person name="Theologis A."/>
            <person name="Ecker J.R."/>
            <person name="Palm C.J."/>
            <person name="Federspiel N.A."/>
            <person name="Kaul S."/>
            <person name="White O."/>
            <person name="Alonso J."/>
            <person name="Altafi H."/>
            <person name="Araujo R."/>
            <person name="Bowman C.L."/>
            <person name="Brooks S.Y."/>
            <person name="Buehler E."/>
            <person name="Chan A."/>
            <person name="Chao Q."/>
            <person name="Chen H."/>
            <person name="Cheuk R.F."/>
            <person name="Chin C.W."/>
            <person name="Chung M.K."/>
            <person name="Conn L."/>
            <person name="Conway A.B."/>
            <person name="Conway A.R."/>
            <person name="Creasy T.H."/>
            <person name="Dewar K."/>
            <person name="Dunn P."/>
            <person name="Etgu P."/>
            <person name="Feldblyum T.V."/>
            <person name="Feng J.-D."/>
            <person name="Fong B."/>
            <person name="Fujii C.Y."/>
            <person name="Gill J.E."/>
            <person name="Goldsmith A.D."/>
            <person name="Haas B."/>
            <person name="Hansen N.F."/>
            <person name="Hughes B."/>
            <person name="Huizar L."/>
            <person name="Hunter J.L."/>
            <person name="Jenkins J."/>
            <person name="Johnson-Hopson C."/>
            <person name="Khan S."/>
            <person name="Khaykin E."/>
            <person name="Kim C.J."/>
            <person name="Koo H.L."/>
            <person name="Kremenetskaia I."/>
            <person name="Kurtz D.B."/>
            <person name="Kwan A."/>
            <person name="Lam B."/>
            <person name="Langin-Hooper S."/>
            <person name="Lee A."/>
            <person name="Lee J.M."/>
            <person name="Lenz C.A."/>
            <person name="Li J.H."/>
            <person name="Li Y.-P."/>
            <person name="Lin X."/>
            <person name="Liu S.X."/>
            <person name="Liu Z.A."/>
            <person name="Luros J.S."/>
            <person name="Maiti R."/>
            <person name="Marziali A."/>
            <person name="Militscher J."/>
            <person name="Miranda M."/>
            <person name="Nguyen M."/>
            <person name="Nierman W.C."/>
            <person name="Osborne B.I."/>
            <person name="Pai G."/>
            <person name="Peterson J."/>
            <person name="Pham P.K."/>
            <person name="Rizzo M."/>
            <person name="Rooney T."/>
            <person name="Rowley D."/>
            <person name="Sakano H."/>
            <person name="Salzberg S.L."/>
            <person name="Schwartz J.R."/>
            <person name="Shinn P."/>
            <person name="Southwick A.M."/>
            <person name="Sun H."/>
            <person name="Tallon L.J."/>
            <person name="Tambunga G."/>
            <person name="Toriumi M.J."/>
            <person name="Town C.D."/>
            <person name="Utterback T."/>
            <person name="Van Aken S."/>
            <person name="Vaysberg M."/>
            <person name="Vysotskaia V.S."/>
            <person name="Walker M."/>
            <person name="Wu D."/>
            <person name="Yu G."/>
            <person name="Fraser C.M."/>
            <person name="Venter J.C."/>
            <person name="Davis R.W."/>
        </authorList>
    </citation>
    <scope>NUCLEOTIDE SEQUENCE [LARGE SCALE GENOMIC DNA]</scope>
    <source>
        <strain>cv. Columbia</strain>
    </source>
</reference>
<reference key="2">
    <citation type="journal article" date="2017" name="Plant J.">
        <title>Araport11: a complete reannotation of the Arabidopsis thaliana reference genome.</title>
        <authorList>
            <person name="Cheng C.Y."/>
            <person name="Krishnakumar V."/>
            <person name="Chan A.P."/>
            <person name="Thibaud-Nissen F."/>
            <person name="Schobel S."/>
            <person name="Town C.D."/>
        </authorList>
    </citation>
    <scope>GENOME REANNOTATION</scope>
    <source>
        <strain>cv. Columbia</strain>
    </source>
</reference>
<reference key="3">
    <citation type="journal article" date="2001" name="Plant Physiol.">
        <title>Inventory of the superfamily of P-type ion pumps in Arabidopsis.</title>
        <authorList>
            <person name="Axelsen K.B."/>
            <person name="Palmgren M.G."/>
        </authorList>
    </citation>
    <scope>GENE FAMILY</scope>
    <scope>NOMENCLATURE</scope>
</reference>
<name>ALA5_ARATH</name>